<organism>
    <name type="scientific">Homo sapiens</name>
    <name type="common">Human</name>
    <dbReference type="NCBI Taxonomy" id="9606"/>
    <lineage>
        <taxon>Eukaryota</taxon>
        <taxon>Metazoa</taxon>
        <taxon>Chordata</taxon>
        <taxon>Craniata</taxon>
        <taxon>Vertebrata</taxon>
        <taxon>Euteleostomi</taxon>
        <taxon>Mammalia</taxon>
        <taxon>Eutheria</taxon>
        <taxon>Euarchontoglires</taxon>
        <taxon>Primates</taxon>
        <taxon>Haplorrhini</taxon>
        <taxon>Catarrhini</taxon>
        <taxon>Hominidae</taxon>
        <taxon>Homo</taxon>
    </lineage>
</organism>
<comment type="function">
    <text evidence="1">May be involved in the development of the mandibular molar tooth germ at the bud stage.</text>
</comment>
<comment type="interaction">
    <interactant intactId="EBI-5660512">
        <id>Q8N2R0</id>
    </interactant>
    <interactant intactId="EBI-348380">
        <id>P25788</id>
        <label>PSMA3</label>
    </interactant>
    <organismsDiffer>false</organismsDiffer>
    <experiments>3</experiments>
</comment>
<comment type="interaction">
    <interactant intactId="EBI-12850348">
        <id>Q8N2R0-2</id>
    </interactant>
    <interactant intactId="EBI-12111050">
        <id>Q3LI64</id>
        <label>KRTAP6-1</label>
    </interactant>
    <organismsDiffer>false</organismsDiffer>
    <experiments>3</experiments>
</comment>
<comment type="subcellular location">
    <subcellularLocation>
        <location evidence="7">Nucleus</location>
    </subcellularLocation>
</comment>
<comment type="alternative products">
    <event type="alternative splicing"/>
    <isoform>
        <id>Q8N2R0-1</id>
        <name>1</name>
        <name>OSR2A</name>
        <sequence type="displayed"/>
    </isoform>
    <isoform>
        <id>Q8N2R0-2</id>
        <name>2</name>
        <name>OSR2B</name>
        <sequence type="described" ref="VSP_017121"/>
    </isoform>
    <isoform>
        <id>Q8N2R0-3</id>
        <name>3</name>
        <sequence type="described" ref="VSP_054849"/>
    </isoform>
</comment>
<comment type="similarity">
    <text evidence="7">Belongs to the Odd C2H2-type zinc-finger protein family.</text>
</comment>
<protein>
    <recommendedName>
        <fullName evidence="7">Protein odd-skipped-related 2</fullName>
    </recommendedName>
</protein>
<feature type="chain" id="PRO_0000047007" description="Protein odd-skipped-related 2">
    <location>
        <begin position="1"/>
        <end position="312"/>
    </location>
</feature>
<feature type="zinc finger region" description="C2H2-type 1" evidence="2">
    <location>
        <begin position="172"/>
        <end position="194"/>
    </location>
</feature>
<feature type="zinc finger region" description="C2H2-type 2" evidence="2">
    <location>
        <begin position="200"/>
        <end position="222"/>
    </location>
</feature>
<feature type="zinc finger region" description="C2H2-type 3" evidence="2">
    <location>
        <begin position="228"/>
        <end position="250"/>
    </location>
</feature>
<feature type="zinc finger region" description="C2H2-type 4" evidence="2">
    <location>
        <begin position="256"/>
        <end position="278"/>
    </location>
</feature>
<feature type="zinc finger region" description="C2H2-type 5; degenerate" evidence="2">
    <location>
        <begin position="284"/>
        <end position="306"/>
    </location>
</feature>
<feature type="region of interest" description="Disordered" evidence="3">
    <location>
        <begin position="129"/>
        <end position="165"/>
    </location>
</feature>
<feature type="compositionally biased region" description="Low complexity" evidence="3">
    <location>
        <begin position="136"/>
        <end position="153"/>
    </location>
</feature>
<feature type="splice variant" id="VSP_054849" description="In isoform 3." evidence="4">
    <original>M</original>
    <variation>MGLRAEEGKRKPPRSVRGEVSPSQGPLAQEDEARRLRSCTPACHPGKRGKGGHRARRQRSAWDLTTHPLTHRSQELRGAAATEGFLYVLLSHWVFVGAPRPPASDSWKKGLVPSAPPASRKM</variation>
    <location>
        <position position="1"/>
    </location>
</feature>
<feature type="splice variant" id="VSP_017121" description="In isoform 2." evidence="4 5 6">
    <original>ESPHKCPTCGRTFNQRSNLKTHLLTHTDIKPYSCEQCGKVFRRNCDLRRHSLTHTPRQDF</original>
    <variation>TSSPTAASSAAKCSGETVICGGTA</variation>
    <location>
        <begin position="253"/>
        <end position="312"/>
    </location>
</feature>
<feature type="sequence conflict" description="In Ref. 1; AAK74066." evidence="7" ref="1">
    <original>K</original>
    <variation>G</variation>
    <location>
        <position position="132"/>
    </location>
</feature>
<feature type="sequence conflict" description="In Ref. 2; BAC11035." evidence="7" ref="2">
    <original>C</original>
    <variation>R</variation>
    <location>
        <position position="286"/>
    </location>
</feature>
<dbReference type="EMBL" id="AY038072">
    <property type="protein sequence ID" value="AAK74066.1"/>
    <property type="molecule type" value="mRNA"/>
</dbReference>
<dbReference type="EMBL" id="AY038073">
    <property type="protein sequence ID" value="AAK74067.1"/>
    <property type="molecule type" value="mRNA"/>
</dbReference>
<dbReference type="EMBL" id="AK074518">
    <property type="protein sequence ID" value="BAC11035.1"/>
    <property type="molecule type" value="mRNA"/>
</dbReference>
<dbReference type="EMBL" id="AK291491">
    <property type="protein sequence ID" value="BAF84180.1"/>
    <property type="molecule type" value="mRNA"/>
</dbReference>
<dbReference type="EMBL" id="AK304654">
    <property type="protein sequence ID" value="BAG65429.1"/>
    <property type="molecule type" value="mRNA"/>
</dbReference>
<dbReference type="EMBL" id="AC016877">
    <property type="status" value="NOT_ANNOTATED_CDS"/>
    <property type="molecule type" value="Genomic_DNA"/>
</dbReference>
<dbReference type="EMBL" id="CH471060">
    <property type="protein sequence ID" value="EAW91785.1"/>
    <property type="molecule type" value="Genomic_DNA"/>
</dbReference>
<dbReference type="EMBL" id="BC016936">
    <property type="protein sequence ID" value="AAH16936.1"/>
    <property type="molecule type" value="mRNA"/>
</dbReference>
<dbReference type="CCDS" id="CCDS47901.1">
    <molecule id="Q8N2R0-1"/>
</dbReference>
<dbReference type="CCDS" id="CCDS47902.1">
    <molecule id="Q8N2R0-2"/>
</dbReference>
<dbReference type="CCDS" id="CCDS69520.1">
    <molecule id="Q8N2R0-3"/>
</dbReference>
<dbReference type="RefSeq" id="NP_001135934.1">
    <molecule id="Q8N2R0-1"/>
    <property type="nucleotide sequence ID" value="NM_001142462.3"/>
</dbReference>
<dbReference type="RefSeq" id="NP_001273770.1">
    <molecule id="Q8N2R0-3"/>
    <property type="nucleotide sequence ID" value="NM_001286841.2"/>
</dbReference>
<dbReference type="RefSeq" id="NP_443727.2">
    <molecule id="Q8N2R0-2"/>
    <property type="nucleotide sequence ID" value="NM_053001.4"/>
</dbReference>
<dbReference type="RefSeq" id="XP_011515129.1">
    <molecule id="Q8N2R0-1"/>
    <property type="nucleotide sequence ID" value="XM_011516827.3"/>
</dbReference>
<dbReference type="RefSeq" id="XP_016868507.1">
    <property type="nucleotide sequence ID" value="XM_017013018.1"/>
</dbReference>
<dbReference type="RefSeq" id="XP_047277283.1">
    <molecule id="Q8N2R0-1"/>
    <property type="nucleotide sequence ID" value="XM_047421327.1"/>
</dbReference>
<dbReference type="RefSeq" id="XP_054215695.1">
    <molecule id="Q8N2R0-1"/>
    <property type="nucleotide sequence ID" value="XM_054359720.1"/>
</dbReference>
<dbReference type="RefSeq" id="XP_054215696.1">
    <molecule id="Q8N2R0-1"/>
    <property type="nucleotide sequence ID" value="XM_054359721.1"/>
</dbReference>
<dbReference type="SMR" id="Q8N2R0"/>
<dbReference type="BioGRID" id="125467">
    <property type="interactions" value="9"/>
</dbReference>
<dbReference type="FunCoup" id="Q8N2R0">
    <property type="interactions" value="958"/>
</dbReference>
<dbReference type="IntAct" id="Q8N2R0">
    <property type="interactions" value="5"/>
</dbReference>
<dbReference type="STRING" id="9606.ENSP00000414657"/>
<dbReference type="iPTMnet" id="Q8N2R0"/>
<dbReference type="PhosphoSitePlus" id="Q8N2R0"/>
<dbReference type="BioMuta" id="OSR2"/>
<dbReference type="DMDM" id="146345473"/>
<dbReference type="MassIVE" id="Q8N2R0"/>
<dbReference type="PaxDb" id="9606-ENSP00000414657"/>
<dbReference type="PeptideAtlas" id="Q8N2R0"/>
<dbReference type="Antibodypedia" id="26083">
    <property type="antibodies" value="152 antibodies from 29 providers"/>
</dbReference>
<dbReference type="DNASU" id="116039"/>
<dbReference type="Ensembl" id="ENST00000297565.9">
    <molecule id="Q8N2R0-1"/>
    <property type="protein sequence ID" value="ENSP00000297565.4"/>
    <property type="gene ID" value="ENSG00000164920.10"/>
</dbReference>
<dbReference type="Ensembl" id="ENST00000435298.6">
    <molecule id="Q8N2R0-2"/>
    <property type="protein sequence ID" value="ENSP00000402862.2"/>
    <property type="gene ID" value="ENSG00000164920.10"/>
</dbReference>
<dbReference type="Ensembl" id="ENST00000457907.3">
    <molecule id="Q8N2R0-3"/>
    <property type="protein sequence ID" value="ENSP00000414657.2"/>
    <property type="gene ID" value="ENSG00000164920.10"/>
</dbReference>
<dbReference type="Ensembl" id="ENST00000522510.5">
    <molecule id="Q8N2R0-1"/>
    <property type="protein sequence ID" value="ENSP00000430780.1"/>
    <property type="gene ID" value="ENSG00000164920.10"/>
</dbReference>
<dbReference type="GeneID" id="116039"/>
<dbReference type="KEGG" id="hsa:116039"/>
<dbReference type="MANE-Select" id="ENST00000297565.9">
    <property type="protein sequence ID" value="ENSP00000297565.4"/>
    <property type="RefSeq nucleotide sequence ID" value="NM_001142462.3"/>
    <property type="RefSeq protein sequence ID" value="NP_001135934.1"/>
</dbReference>
<dbReference type="UCSC" id="uc003yiq.5">
    <molecule id="Q8N2R0-1"/>
    <property type="organism name" value="human"/>
</dbReference>
<dbReference type="AGR" id="HGNC:15830"/>
<dbReference type="CTD" id="116039"/>
<dbReference type="DisGeNET" id="116039"/>
<dbReference type="GeneCards" id="OSR2"/>
<dbReference type="HGNC" id="HGNC:15830">
    <property type="gene designation" value="OSR2"/>
</dbReference>
<dbReference type="HPA" id="ENSG00000164920">
    <property type="expression patterns" value="Tissue enhanced (cervix, endometrium, fallopian tube)"/>
</dbReference>
<dbReference type="MIM" id="611297">
    <property type="type" value="gene"/>
</dbReference>
<dbReference type="neXtProt" id="NX_Q8N2R0"/>
<dbReference type="OpenTargets" id="ENSG00000164920"/>
<dbReference type="PharmGKB" id="PA134924513"/>
<dbReference type="VEuPathDB" id="HostDB:ENSG00000164920"/>
<dbReference type="eggNOG" id="KOG1721">
    <property type="taxonomic scope" value="Eukaryota"/>
</dbReference>
<dbReference type="GeneTree" id="ENSGT00940000160530"/>
<dbReference type="HOGENOM" id="CLU_051854_0_0_1"/>
<dbReference type="InParanoid" id="Q8N2R0"/>
<dbReference type="OMA" id="MWERICQ"/>
<dbReference type="OrthoDB" id="9451254at2759"/>
<dbReference type="PAN-GO" id="Q8N2R0">
    <property type="GO annotations" value="6 GO annotations based on evolutionary models"/>
</dbReference>
<dbReference type="PhylomeDB" id="Q8N2R0"/>
<dbReference type="TreeFam" id="TF350876"/>
<dbReference type="PathwayCommons" id="Q8N2R0"/>
<dbReference type="SignaLink" id="Q8N2R0"/>
<dbReference type="BioGRID-ORCS" id="116039">
    <property type="hits" value="18 hits in 1185 CRISPR screens"/>
</dbReference>
<dbReference type="ChiTaRS" id="OSR2">
    <property type="organism name" value="human"/>
</dbReference>
<dbReference type="GeneWiki" id="OSR2_(gene)"/>
<dbReference type="GenomeRNAi" id="116039"/>
<dbReference type="Pharos" id="Q8N2R0">
    <property type="development level" value="Tbio"/>
</dbReference>
<dbReference type="PRO" id="PR:Q8N2R0"/>
<dbReference type="Proteomes" id="UP000005640">
    <property type="component" value="Chromosome 8"/>
</dbReference>
<dbReference type="RNAct" id="Q8N2R0">
    <property type="molecule type" value="protein"/>
</dbReference>
<dbReference type="Bgee" id="ENSG00000164920">
    <property type="expression patterns" value="Expressed in palpebral conjunctiva and 147 other cell types or tissues"/>
</dbReference>
<dbReference type="ExpressionAtlas" id="Q8N2R0">
    <property type="expression patterns" value="baseline and differential"/>
</dbReference>
<dbReference type="GO" id="GO:0005634">
    <property type="term" value="C:nucleus"/>
    <property type="evidence" value="ECO:0000250"/>
    <property type="project" value="UniProtKB"/>
</dbReference>
<dbReference type="GO" id="GO:0001228">
    <property type="term" value="F:DNA-binding transcription activator activity, RNA polymerase II-specific"/>
    <property type="evidence" value="ECO:0000250"/>
    <property type="project" value="ARUK-UCL"/>
</dbReference>
<dbReference type="GO" id="GO:0000981">
    <property type="term" value="F:DNA-binding transcription factor activity, RNA polymerase II-specific"/>
    <property type="evidence" value="ECO:0000318"/>
    <property type="project" value="GO_Central"/>
</dbReference>
<dbReference type="GO" id="GO:0000977">
    <property type="term" value="F:RNA polymerase II transcription regulatory region sequence-specific DNA binding"/>
    <property type="evidence" value="ECO:0000250"/>
    <property type="project" value="ARUK-UCL"/>
</dbReference>
<dbReference type="GO" id="GO:0043565">
    <property type="term" value="F:sequence-specific DNA binding"/>
    <property type="evidence" value="ECO:0000250"/>
    <property type="project" value="UniProtKB"/>
</dbReference>
<dbReference type="GO" id="GO:1990837">
    <property type="term" value="F:sequence-specific double-stranded DNA binding"/>
    <property type="evidence" value="ECO:0000314"/>
    <property type="project" value="ARUK-UCL"/>
</dbReference>
<dbReference type="GO" id="GO:0008270">
    <property type="term" value="F:zinc ion binding"/>
    <property type="evidence" value="ECO:0007669"/>
    <property type="project" value="UniProtKB-KW"/>
</dbReference>
<dbReference type="GO" id="GO:0060349">
    <property type="term" value="P:bone morphogenesis"/>
    <property type="evidence" value="ECO:0000250"/>
    <property type="project" value="UniProtKB"/>
</dbReference>
<dbReference type="GO" id="GO:0030154">
    <property type="term" value="P:cell differentiation"/>
    <property type="evidence" value="ECO:0000250"/>
    <property type="project" value="BHF-UCL"/>
</dbReference>
<dbReference type="GO" id="GO:0002062">
    <property type="term" value="P:chondrocyte differentiation"/>
    <property type="evidence" value="ECO:0000250"/>
    <property type="project" value="BHF-UCL"/>
</dbReference>
<dbReference type="GO" id="GO:0009792">
    <property type="term" value="P:embryo development ending in birth or egg hatching"/>
    <property type="evidence" value="ECO:0000250"/>
    <property type="project" value="UniProtKB"/>
</dbReference>
<dbReference type="GO" id="GO:0042733">
    <property type="term" value="P:embryonic digit morphogenesis"/>
    <property type="evidence" value="ECO:0000250"/>
    <property type="project" value="BHF-UCL"/>
</dbReference>
<dbReference type="GO" id="GO:0035115">
    <property type="term" value="P:embryonic forelimb morphogenesis"/>
    <property type="evidence" value="ECO:0000250"/>
    <property type="project" value="BHF-UCL"/>
</dbReference>
<dbReference type="GO" id="GO:0035116">
    <property type="term" value="P:embryonic hindlimb morphogenesis"/>
    <property type="evidence" value="ECO:0000250"/>
    <property type="project" value="BHF-UCL"/>
</dbReference>
<dbReference type="GO" id="GO:0072498">
    <property type="term" value="P:embryonic skeletal joint development"/>
    <property type="evidence" value="ECO:0000250"/>
    <property type="project" value="BHF-UCL"/>
</dbReference>
<dbReference type="GO" id="GO:0060272">
    <property type="term" value="P:embryonic skeletal joint morphogenesis"/>
    <property type="evidence" value="ECO:0000250"/>
    <property type="project" value="BHF-UCL"/>
</dbReference>
<dbReference type="GO" id="GO:0036023">
    <property type="term" value="P:embryonic skeletal limb joint morphogenesis"/>
    <property type="evidence" value="ECO:0000250"/>
    <property type="project" value="BHF-UCL"/>
</dbReference>
<dbReference type="GO" id="GO:0048704">
    <property type="term" value="P:embryonic skeletal system morphogenesis"/>
    <property type="evidence" value="ECO:0000250"/>
    <property type="project" value="UniProtKB"/>
</dbReference>
<dbReference type="GO" id="GO:0061029">
    <property type="term" value="P:eyelid development in camera-type eye"/>
    <property type="evidence" value="ECO:0000250"/>
    <property type="project" value="UniProtKB"/>
</dbReference>
<dbReference type="GO" id="GO:0060322">
    <property type="term" value="P:head development"/>
    <property type="evidence" value="ECO:0000250"/>
    <property type="project" value="BHF-UCL"/>
</dbReference>
<dbReference type="GO" id="GO:0001823">
    <property type="term" value="P:mesonephros development"/>
    <property type="evidence" value="ECO:0000250"/>
    <property type="project" value="UniProtKB"/>
</dbReference>
<dbReference type="GO" id="GO:0001656">
    <property type="term" value="P:metanephros development"/>
    <property type="evidence" value="ECO:0000250"/>
    <property type="project" value="UniProtKB"/>
</dbReference>
<dbReference type="GO" id="GO:0042474">
    <property type="term" value="P:middle ear morphogenesis"/>
    <property type="evidence" value="ECO:0000250"/>
    <property type="project" value="UniProtKB"/>
</dbReference>
<dbReference type="GO" id="GO:0000122">
    <property type="term" value="P:negative regulation of transcription by RNA polymerase II"/>
    <property type="evidence" value="ECO:0000250"/>
    <property type="project" value="BHF-UCL"/>
</dbReference>
<dbReference type="GO" id="GO:0042476">
    <property type="term" value="P:odontogenesis"/>
    <property type="evidence" value="ECO:0000250"/>
    <property type="project" value="UniProtKB"/>
</dbReference>
<dbReference type="GO" id="GO:0033687">
    <property type="term" value="P:osteoblast proliferation"/>
    <property type="evidence" value="ECO:0000250"/>
    <property type="project" value="UniProtKB"/>
</dbReference>
<dbReference type="GO" id="GO:0007389">
    <property type="term" value="P:pattern specification process"/>
    <property type="evidence" value="ECO:0000318"/>
    <property type="project" value="GO_Central"/>
</dbReference>
<dbReference type="GO" id="GO:0030501">
    <property type="term" value="P:positive regulation of bone mineralization"/>
    <property type="evidence" value="ECO:0000250"/>
    <property type="project" value="BHF-UCL"/>
</dbReference>
<dbReference type="GO" id="GO:0008284">
    <property type="term" value="P:positive regulation of cell population proliferation"/>
    <property type="evidence" value="ECO:0000250"/>
    <property type="project" value="UniProtKB"/>
</dbReference>
<dbReference type="GO" id="GO:0045893">
    <property type="term" value="P:positive regulation of DNA-templated transcription"/>
    <property type="evidence" value="ECO:0000250"/>
    <property type="project" value="UniProtKB"/>
</dbReference>
<dbReference type="GO" id="GO:0050679">
    <property type="term" value="P:positive regulation of epithelial cell proliferation"/>
    <property type="evidence" value="ECO:0000250"/>
    <property type="project" value="UniProtKB"/>
</dbReference>
<dbReference type="GO" id="GO:0010628">
    <property type="term" value="P:positive regulation of gene expression"/>
    <property type="evidence" value="ECO:0000250"/>
    <property type="project" value="UniProtKB"/>
</dbReference>
<dbReference type="GO" id="GO:2000648">
    <property type="term" value="P:positive regulation of stem cell proliferation"/>
    <property type="evidence" value="ECO:0007669"/>
    <property type="project" value="Ensembl"/>
</dbReference>
<dbReference type="GO" id="GO:0045944">
    <property type="term" value="P:positive regulation of transcription by RNA polymerase II"/>
    <property type="evidence" value="ECO:0000250"/>
    <property type="project" value="BHF-UCL"/>
</dbReference>
<dbReference type="GO" id="GO:0048793">
    <property type="term" value="P:pronephros development"/>
    <property type="evidence" value="ECO:0000318"/>
    <property type="project" value="GO_Central"/>
</dbReference>
<dbReference type="GO" id="GO:0060021">
    <property type="term" value="P:roof of mouth development"/>
    <property type="evidence" value="ECO:0000250"/>
    <property type="project" value="UniProtKB"/>
</dbReference>
<dbReference type="GO" id="GO:0072089">
    <property type="term" value="P:stem cell proliferation"/>
    <property type="evidence" value="ECO:0007669"/>
    <property type="project" value="Ensembl"/>
</dbReference>
<dbReference type="GO" id="GO:0001655">
    <property type="term" value="P:urogenital system development"/>
    <property type="evidence" value="ECO:0000318"/>
    <property type="project" value="GO_Central"/>
</dbReference>
<dbReference type="FunFam" id="3.30.160.60:FF:000254">
    <property type="entry name" value="Odd-skipped related transciption factor 1"/>
    <property type="match status" value="1"/>
</dbReference>
<dbReference type="FunFam" id="3.30.160.60:FF:000090">
    <property type="entry name" value="Odd-skipped-related transciption factor 2"/>
    <property type="match status" value="1"/>
</dbReference>
<dbReference type="FunFam" id="3.30.160.60:FF:000318">
    <property type="entry name" value="Odd-skipped-related transciption factor 2"/>
    <property type="match status" value="1"/>
</dbReference>
<dbReference type="FunFam" id="3.30.160.60:FF:000311">
    <property type="entry name" value="protein odd-skipped-related 2 isoform X1"/>
    <property type="match status" value="1"/>
</dbReference>
<dbReference type="FunFam" id="3.30.160.60:FF:000148">
    <property type="entry name" value="zinc finger protein Gfi-1"/>
    <property type="match status" value="1"/>
</dbReference>
<dbReference type="Gene3D" id="3.30.160.60">
    <property type="entry name" value="Classic Zinc Finger"/>
    <property type="match status" value="5"/>
</dbReference>
<dbReference type="InterPro" id="IPR050717">
    <property type="entry name" value="C2H2-ZF_Transcription_Reg"/>
</dbReference>
<dbReference type="InterPro" id="IPR036236">
    <property type="entry name" value="Znf_C2H2_sf"/>
</dbReference>
<dbReference type="InterPro" id="IPR013087">
    <property type="entry name" value="Znf_C2H2_type"/>
</dbReference>
<dbReference type="PANTHER" id="PTHR14196">
    <property type="entry name" value="ODD-SKIPPED - RELATED"/>
    <property type="match status" value="1"/>
</dbReference>
<dbReference type="PANTHER" id="PTHR14196:SF4">
    <property type="entry name" value="PROTEIN ODD-SKIPPED-RELATED 2"/>
    <property type="match status" value="1"/>
</dbReference>
<dbReference type="Pfam" id="PF00096">
    <property type="entry name" value="zf-C2H2"/>
    <property type="match status" value="5"/>
</dbReference>
<dbReference type="SMART" id="SM00355">
    <property type="entry name" value="ZnF_C2H2"/>
    <property type="match status" value="5"/>
</dbReference>
<dbReference type="SUPFAM" id="SSF57667">
    <property type="entry name" value="beta-beta-alpha zinc fingers"/>
    <property type="match status" value="3"/>
</dbReference>
<dbReference type="PROSITE" id="PS00028">
    <property type="entry name" value="ZINC_FINGER_C2H2_1"/>
    <property type="match status" value="5"/>
</dbReference>
<dbReference type="PROSITE" id="PS50157">
    <property type="entry name" value="ZINC_FINGER_C2H2_2"/>
    <property type="match status" value="5"/>
</dbReference>
<proteinExistence type="evidence at protein level"/>
<reference key="1">
    <citation type="submission" date="2001-06" db="EMBL/GenBank/DDBJ databases">
        <title>Isolation of the human OSR2 gene.</title>
        <authorList>
            <person name="Jiang R."/>
            <person name="Cho E.-S."/>
            <person name="Lan Y."/>
        </authorList>
    </citation>
    <scope>NUCLEOTIDE SEQUENCE [MRNA] (ISOFORMS 1 AND 2)</scope>
</reference>
<reference key="2">
    <citation type="journal article" date="2004" name="Nat. Genet.">
        <title>Complete sequencing and characterization of 21,243 full-length human cDNAs.</title>
        <authorList>
            <person name="Ota T."/>
            <person name="Suzuki Y."/>
            <person name="Nishikawa T."/>
            <person name="Otsuki T."/>
            <person name="Sugiyama T."/>
            <person name="Irie R."/>
            <person name="Wakamatsu A."/>
            <person name="Hayashi K."/>
            <person name="Sato H."/>
            <person name="Nagai K."/>
            <person name="Kimura K."/>
            <person name="Makita H."/>
            <person name="Sekine M."/>
            <person name="Obayashi M."/>
            <person name="Nishi T."/>
            <person name="Shibahara T."/>
            <person name="Tanaka T."/>
            <person name="Ishii S."/>
            <person name="Yamamoto J."/>
            <person name="Saito K."/>
            <person name="Kawai Y."/>
            <person name="Isono Y."/>
            <person name="Nakamura Y."/>
            <person name="Nagahari K."/>
            <person name="Murakami K."/>
            <person name="Yasuda T."/>
            <person name="Iwayanagi T."/>
            <person name="Wagatsuma M."/>
            <person name="Shiratori A."/>
            <person name="Sudo H."/>
            <person name="Hosoiri T."/>
            <person name="Kaku Y."/>
            <person name="Kodaira H."/>
            <person name="Kondo H."/>
            <person name="Sugawara M."/>
            <person name="Takahashi M."/>
            <person name="Kanda K."/>
            <person name="Yokoi T."/>
            <person name="Furuya T."/>
            <person name="Kikkawa E."/>
            <person name="Omura Y."/>
            <person name="Abe K."/>
            <person name="Kamihara K."/>
            <person name="Katsuta N."/>
            <person name="Sato K."/>
            <person name="Tanikawa M."/>
            <person name="Yamazaki M."/>
            <person name="Ninomiya K."/>
            <person name="Ishibashi T."/>
            <person name="Yamashita H."/>
            <person name="Murakawa K."/>
            <person name="Fujimori K."/>
            <person name="Tanai H."/>
            <person name="Kimata M."/>
            <person name="Watanabe M."/>
            <person name="Hiraoka S."/>
            <person name="Chiba Y."/>
            <person name="Ishida S."/>
            <person name="Ono Y."/>
            <person name="Takiguchi S."/>
            <person name="Watanabe S."/>
            <person name="Yosida M."/>
            <person name="Hotuta T."/>
            <person name="Kusano J."/>
            <person name="Kanehori K."/>
            <person name="Takahashi-Fujii A."/>
            <person name="Hara H."/>
            <person name="Tanase T.-O."/>
            <person name="Nomura Y."/>
            <person name="Togiya S."/>
            <person name="Komai F."/>
            <person name="Hara R."/>
            <person name="Takeuchi K."/>
            <person name="Arita M."/>
            <person name="Imose N."/>
            <person name="Musashino K."/>
            <person name="Yuuki H."/>
            <person name="Oshima A."/>
            <person name="Sasaki N."/>
            <person name="Aotsuka S."/>
            <person name="Yoshikawa Y."/>
            <person name="Matsunawa H."/>
            <person name="Ichihara T."/>
            <person name="Shiohata N."/>
            <person name="Sano S."/>
            <person name="Moriya S."/>
            <person name="Momiyama H."/>
            <person name="Satoh N."/>
            <person name="Takami S."/>
            <person name="Terashima Y."/>
            <person name="Suzuki O."/>
            <person name="Nakagawa S."/>
            <person name="Senoh A."/>
            <person name="Mizoguchi H."/>
            <person name="Goto Y."/>
            <person name="Shimizu F."/>
            <person name="Wakebe H."/>
            <person name="Hishigaki H."/>
            <person name="Watanabe T."/>
            <person name="Sugiyama A."/>
            <person name="Takemoto M."/>
            <person name="Kawakami B."/>
            <person name="Yamazaki M."/>
            <person name="Watanabe K."/>
            <person name="Kumagai A."/>
            <person name="Itakura S."/>
            <person name="Fukuzumi Y."/>
            <person name="Fujimori Y."/>
            <person name="Komiyama M."/>
            <person name="Tashiro H."/>
            <person name="Tanigami A."/>
            <person name="Fujiwara T."/>
            <person name="Ono T."/>
            <person name="Yamada K."/>
            <person name="Fujii Y."/>
            <person name="Ozaki K."/>
            <person name="Hirao M."/>
            <person name="Ohmori Y."/>
            <person name="Kawabata A."/>
            <person name="Hikiji T."/>
            <person name="Kobatake N."/>
            <person name="Inagaki H."/>
            <person name="Ikema Y."/>
            <person name="Okamoto S."/>
            <person name="Okitani R."/>
            <person name="Kawakami T."/>
            <person name="Noguchi S."/>
            <person name="Itoh T."/>
            <person name="Shigeta K."/>
            <person name="Senba T."/>
            <person name="Matsumura K."/>
            <person name="Nakajima Y."/>
            <person name="Mizuno T."/>
            <person name="Morinaga M."/>
            <person name="Sasaki M."/>
            <person name="Togashi T."/>
            <person name="Oyama M."/>
            <person name="Hata H."/>
            <person name="Watanabe M."/>
            <person name="Komatsu T."/>
            <person name="Mizushima-Sugano J."/>
            <person name="Satoh T."/>
            <person name="Shirai Y."/>
            <person name="Takahashi Y."/>
            <person name="Nakagawa K."/>
            <person name="Okumura K."/>
            <person name="Nagase T."/>
            <person name="Nomura N."/>
            <person name="Kikuchi H."/>
            <person name="Masuho Y."/>
            <person name="Yamashita R."/>
            <person name="Nakai K."/>
            <person name="Yada T."/>
            <person name="Nakamura Y."/>
            <person name="Ohara O."/>
            <person name="Isogai T."/>
            <person name="Sugano S."/>
        </authorList>
    </citation>
    <scope>NUCLEOTIDE SEQUENCE [LARGE SCALE MRNA] (ISOFORMS 1; 2 AND 3)</scope>
    <source>
        <tissue>Embryo</tissue>
        <tissue>Ovary</tissue>
    </source>
</reference>
<reference key="3">
    <citation type="journal article" date="2006" name="Nature">
        <title>DNA sequence and analysis of human chromosome 8.</title>
        <authorList>
            <person name="Nusbaum C."/>
            <person name="Mikkelsen T.S."/>
            <person name="Zody M.C."/>
            <person name="Asakawa S."/>
            <person name="Taudien S."/>
            <person name="Garber M."/>
            <person name="Kodira C.D."/>
            <person name="Schueler M.G."/>
            <person name="Shimizu A."/>
            <person name="Whittaker C.A."/>
            <person name="Chang J.L."/>
            <person name="Cuomo C.A."/>
            <person name="Dewar K."/>
            <person name="FitzGerald M.G."/>
            <person name="Yang X."/>
            <person name="Allen N.R."/>
            <person name="Anderson S."/>
            <person name="Asakawa T."/>
            <person name="Blechschmidt K."/>
            <person name="Bloom T."/>
            <person name="Borowsky M.L."/>
            <person name="Butler J."/>
            <person name="Cook A."/>
            <person name="Corum B."/>
            <person name="DeArellano K."/>
            <person name="DeCaprio D."/>
            <person name="Dooley K.T."/>
            <person name="Dorris L. III"/>
            <person name="Engels R."/>
            <person name="Gloeckner G."/>
            <person name="Hafez N."/>
            <person name="Hagopian D.S."/>
            <person name="Hall J.L."/>
            <person name="Ishikawa S.K."/>
            <person name="Jaffe D.B."/>
            <person name="Kamat A."/>
            <person name="Kudoh J."/>
            <person name="Lehmann R."/>
            <person name="Lokitsang T."/>
            <person name="Macdonald P."/>
            <person name="Major J.E."/>
            <person name="Matthews C.D."/>
            <person name="Mauceli E."/>
            <person name="Menzel U."/>
            <person name="Mihalev A.H."/>
            <person name="Minoshima S."/>
            <person name="Murayama Y."/>
            <person name="Naylor J.W."/>
            <person name="Nicol R."/>
            <person name="Nguyen C."/>
            <person name="O'Leary S.B."/>
            <person name="O'Neill K."/>
            <person name="Parker S.C.J."/>
            <person name="Polley A."/>
            <person name="Raymond C.K."/>
            <person name="Reichwald K."/>
            <person name="Rodriguez J."/>
            <person name="Sasaki T."/>
            <person name="Schilhabel M."/>
            <person name="Siddiqui R."/>
            <person name="Smith C.L."/>
            <person name="Sneddon T.P."/>
            <person name="Talamas J.A."/>
            <person name="Tenzin P."/>
            <person name="Topham K."/>
            <person name="Venkataraman V."/>
            <person name="Wen G."/>
            <person name="Yamazaki S."/>
            <person name="Young S.K."/>
            <person name="Zeng Q."/>
            <person name="Zimmer A.R."/>
            <person name="Rosenthal A."/>
            <person name="Birren B.W."/>
            <person name="Platzer M."/>
            <person name="Shimizu N."/>
            <person name="Lander E.S."/>
        </authorList>
    </citation>
    <scope>NUCLEOTIDE SEQUENCE [LARGE SCALE GENOMIC DNA]</scope>
</reference>
<reference key="4">
    <citation type="submission" date="2005-07" db="EMBL/GenBank/DDBJ databases">
        <authorList>
            <person name="Mural R.J."/>
            <person name="Istrail S."/>
            <person name="Sutton G.G."/>
            <person name="Florea L."/>
            <person name="Halpern A.L."/>
            <person name="Mobarry C.M."/>
            <person name="Lippert R."/>
            <person name="Walenz B."/>
            <person name="Shatkay H."/>
            <person name="Dew I."/>
            <person name="Miller J.R."/>
            <person name="Flanigan M.J."/>
            <person name="Edwards N.J."/>
            <person name="Bolanos R."/>
            <person name="Fasulo D."/>
            <person name="Halldorsson B.V."/>
            <person name="Hannenhalli S."/>
            <person name="Turner R."/>
            <person name="Yooseph S."/>
            <person name="Lu F."/>
            <person name="Nusskern D.R."/>
            <person name="Shue B.C."/>
            <person name="Zheng X.H."/>
            <person name="Zhong F."/>
            <person name="Delcher A.L."/>
            <person name="Huson D.H."/>
            <person name="Kravitz S.A."/>
            <person name="Mouchard L."/>
            <person name="Reinert K."/>
            <person name="Remington K.A."/>
            <person name="Clark A.G."/>
            <person name="Waterman M.S."/>
            <person name="Eichler E.E."/>
            <person name="Adams M.D."/>
            <person name="Hunkapiller M.W."/>
            <person name="Myers E.W."/>
            <person name="Venter J.C."/>
        </authorList>
    </citation>
    <scope>NUCLEOTIDE SEQUENCE [LARGE SCALE GENOMIC DNA]</scope>
</reference>
<reference key="5">
    <citation type="journal article" date="2004" name="Genome Res.">
        <title>The status, quality, and expansion of the NIH full-length cDNA project: the Mammalian Gene Collection (MGC).</title>
        <authorList>
            <consortium name="The MGC Project Team"/>
        </authorList>
    </citation>
    <scope>NUCLEOTIDE SEQUENCE [LARGE SCALE MRNA] (ISOFORM 2)</scope>
    <source>
        <tissue>Kidney</tissue>
    </source>
</reference>
<name>OSR2_HUMAN</name>
<evidence type="ECO:0000250" key="1">
    <source>
        <dbReference type="UniProtKB" id="Q91ZD1"/>
    </source>
</evidence>
<evidence type="ECO:0000255" key="2">
    <source>
        <dbReference type="PROSITE-ProRule" id="PRU00042"/>
    </source>
</evidence>
<evidence type="ECO:0000256" key="3">
    <source>
        <dbReference type="SAM" id="MobiDB-lite"/>
    </source>
</evidence>
<evidence type="ECO:0000303" key="4">
    <source>
    </source>
</evidence>
<evidence type="ECO:0000303" key="5">
    <source>
    </source>
</evidence>
<evidence type="ECO:0000303" key="6">
    <source ref="1"/>
</evidence>
<evidence type="ECO:0000305" key="7"/>
<evidence type="ECO:0000312" key="8">
    <source>
        <dbReference type="HGNC" id="HGNC:15830"/>
    </source>
</evidence>
<gene>
    <name evidence="8" type="primary">OSR2</name>
</gene>
<accession>Q8N2R0</accession>
<accession>A8K626</accession>
<accession>B4E3B7</accession>
<accession>Q96AM6</accession>
<accession>Q96LB6</accession>
<accession>Q96LB7</accession>
<sequence>MGSKALPAPIPLHPSLQLTNYSFLQAVNTFPATVDHLQGLYGLSAVQTMHMNHWTLGYPNVHEITRSTITEMAAAQGLVDARFPFPALPFTTHLFHPKQGAIAHVLPALHKDRPRFDFANLAVAATQEDPPKMGDLSKLSPGLGSPISGLSKLTPDRKPSRGRLPSKTKKEFICKFCGRHFTKSYNLLIHERTHTDERPYTCDICHKAFRRQDHLRDHRYIHSKEKPFKCQECGKGFCQSRTLAVHKTLHMQESPHKCPTCGRTFNQRSNLKTHLLTHTDIKPYSCEQCGKVFRRNCDLRRHSLTHTPRQDF</sequence>
<keyword id="KW-0025">Alternative splicing</keyword>
<keyword id="KW-0479">Metal-binding</keyword>
<keyword id="KW-0539">Nucleus</keyword>
<keyword id="KW-1267">Proteomics identification</keyword>
<keyword id="KW-1185">Reference proteome</keyword>
<keyword id="KW-0677">Repeat</keyword>
<keyword id="KW-0862">Zinc</keyword>
<keyword id="KW-0863">Zinc-finger</keyword>